<gene>
    <name type="ordered locus">PH1455</name>
</gene>
<sequence>MNVLSGIGEFLVLFGTVFYFLSTLGLIRMPDVYNRMQTATKSVTLGSLSTIIGVGLWALGEGLSLAWLTKTIVIAVFLLLTNPISAHTLIRGAYKSGIPLWEGSVVDKYKEHLKEKEGAE</sequence>
<organism>
    <name type="scientific">Pyrococcus horikoshii (strain ATCC 700860 / DSM 12428 / JCM 9974 / NBRC 100139 / OT-3)</name>
    <dbReference type="NCBI Taxonomy" id="70601"/>
    <lineage>
        <taxon>Archaea</taxon>
        <taxon>Methanobacteriati</taxon>
        <taxon>Methanobacteriota</taxon>
        <taxon>Thermococci</taxon>
        <taxon>Thermococcales</taxon>
        <taxon>Thermococcaceae</taxon>
        <taxon>Pyrococcus</taxon>
    </lineage>
</organism>
<protein>
    <recommendedName>
        <fullName>UPF0091 protein PH1455</fullName>
    </recommendedName>
</protein>
<dbReference type="EMBL" id="BA000001">
    <property type="protein sequence ID" value="BAA30562.1"/>
    <property type="molecule type" value="Genomic_DNA"/>
</dbReference>
<dbReference type="PIR" id="B71020">
    <property type="entry name" value="B71020"/>
</dbReference>
<dbReference type="RefSeq" id="WP_010885536.1">
    <property type="nucleotide sequence ID" value="NC_000961.1"/>
</dbReference>
<dbReference type="SMR" id="O59124"/>
<dbReference type="STRING" id="70601.gene:9378432"/>
<dbReference type="EnsemblBacteria" id="BAA30562">
    <property type="protein sequence ID" value="BAA30562"/>
    <property type="gene ID" value="BAA30562"/>
</dbReference>
<dbReference type="GeneID" id="1443774"/>
<dbReference type="KEGG" id="pho:PH1455"/>
<dbReference type="eggNOG" id="arCOG03082">
    <property type="taxonomic scope" value="Archaea"/>
</dbReference>
<dbReference type="OrthoDB" id="19138at2157"/>
<dbReference type="Proteomes" id="UP000000752">
    <property type="component" value="Chromosome"/>
</dbReference>
<dbReference type="GO" id="GO:0015385">
    <property type="term" value="F:sodium:proton antiporter activity"/>
    <property type="evidence" value="ECO:0007669"/>
    <property type="project" value="TreeGrafter"/>
</dbReference>
<dbReference type="InterPro" id="IPR005133">
    <property type="entry name" value="PhaG_MnhG_YufB"/>
</dbReference>
<dbReference type="NCBIfam" id="TIGR01300">
    <property type="entry name" value="CPA3_mnhG_phaG"/>
    <property type="match status" value="1"/>
</dbReference>
<dbReference type="NCBIfam" id="NF009314">
    <property type="entry name" value="PRK12674.1-2"/>
    <property type="match status" value="1"/>
</dbReference>
<dbReference type="PANTHER" id="PTHR34703">
    <property type="entry name" value="ANTIPORTER SUBUNIT MNHG2-RELATED"/>
    <property type="match status" value="1"/>
</dbReference>
<dbReference type="PANTHER" id="PTHR34703:SF1">
    <property type="entry name" value="ANTIPORTER SUBUNIT MNHG2-RELATED"/>
    <property type="match status" value="1"/>
</dbReference>
<dbReference type="Pfam" id="PF03334">
    <property type="entry name" value="PhaG_MnhG_YufB"/>
    <property type="match status" value="1"/>
</dbReference>
<reference key="1">
    <citation type="journal article" date="1998" name="DNA Res.">
        <title>Complete sequence and gene organization of the genome of a hyper-thermophilic archaebacterium, Pyrococcus horikoshii OT3.</title>
        <authorList>
            <person name="Kawarabayasi Y."/>
            <person name="Sawada M."/>
            <person name="Horikawa H."/>
            <person name="Haikawa Y."/>
            <person name="Hino Y."/>
            <person name="Yamamoto S."/>
            <person name="Sekine M."/>
            <person name="Baba S."/>
            <person name="Kosugi H."/>
            <person name="Hosoyama A."/>
            <person name="Nagai Y."/>
            <person name="Sakai M."/>
            <person name="Ogura K."/>
            <person name="Otsuka R."/>
            <person name="Nakazawa H."/>
            <person name="Takamiya M."/>
            <person name="Ohfuku Y."/>
            <person name="Funahashi T."/>
            <person name="Tanaka T."/>
            <person name="Kudoh Y."/>
            <person name="Yamazaki J."/>
            <person name="Kushida N."/>
            <person name="Oguchi A."/>
            <person name="Aoki K."/>
            <person name="Yoshizawa T."/>
            <person name="Nakamura Y."/>
            <person name="Robb F.T."/>
            <person name="Horikoshi K."/>
            <person name="Masuchi Y."/>
            <person name="Shizuya H."/>
            <person name="Kikuchi H."/>
        </authorList>
    </citation>
    <scope>NUCLEOTIDE SEQUENCE [LARGE SCALE GENOMIC DNA]</scope>
    <source>
        <strain>ATCC 700860 / DSM 12428 / JCM 9974 / NBRC 100139 / OT-3</strain>
    </source>
</reference>
<evidence type="ECO:0000305" key="1"/>
<feature type="chain" id="PRO_0000184969" description="UPF0091 protein PH1455">
    <location>
        <begin position="1"/>
        <end position="120"/>
    </location>
</feature>
<accession>O59124</accession>
<name>Y1455_PYRHO</name>
<comment type="similarity">
    <text evidence="1">Belongs to the UPF0091 family.</text>
</comment>
<proteinExistence type="inferred from homology"/>